<proteinExistence type="predicted"/>
<dbReference type="EMBL" id="AY653733">
    <property type="protein sequence ID" value="AAV51160.1"/>
    <property type="molecule type" value="Genomic_DNA"/>
</dbReference>
<dbReference type="SMR" id="Q5UQZ5"/>
<dbReference type="KEGG" id="vg:9925572"/>
<dbReference type="OrthoDB" id="29815at10239"/>
<dbReference type="Proteomes" id="UP000001134">
    <property type="component" value="Genome"/>
</dbReference>
<dbReference type="Gene3D" id="1.25.40.20">
    <property type="entry name" value="Ankyrin repeat-containing domain"/>
    <property type="match status" value="2"/>
</dbReference>
<dbReference type="InterPro" id="IPR002110">
    <property type="entry name" value="Ankyrin_rpt"/>
</dbReference>
<dbReference type="InterPro" id="IPR036770">
    <property type="entry name" value="Ankyrin_rpt-contain_sf"/>
</dbReference>
<dbReference type="PANTHER" id="PTHR24198">
    <property type="entry name" value="ANKYRIN REPEAT AND PROTEIN KINASE DOMAIN-CONTAINING PROTEIN"/>
    <property type="match status" value="1"/>
</dbReference>
<dbReference type="PANTHER" id="PTHR24198:SF165">
    <property type="entry name" value="ANKYRIN REPEAT-CONTAINING PROTEIN-RELATED"/>
    <property type="match status" value="1"/>
</dbReference>
<dbReference type="Pfam" id="PF12796">
    <property type="entry name" value="Ank_2"/>
    <property type="match status" value="2"/>
</dbReference>
<dbReference type="Pfam" id="PF13637">
    <property type="entry name" value="Ank_4"/>
    <property type="match status" value="1"/>
</dbReference>
<dbReference type="SMART" id="SM00248">
    <property type="entry name" value="ANK"/>
    <property type="match status" value="7"/>
</dbReference>
<dbReference type="SUPFAM" id="SSF48403">
    <property type="entry name" value="Ankyrin repeat"/>
    <property type="match status" value="1"/>
</dbReference>
<dbReference type="PROSITE" id="PS50297">
    <property type="entry name" value="ANK_REP_REGION"/>
    <property type="match status" value="1"/>
</dbReference>
<dbReference type="PROSITE" id="PS50088">
    <property type="entry name" value="ANK_REPEAT"/>
    <property type="match status" value="1"/>
</dbReference>
<feature type="chain" id="PRO_0000067226" description="Putative ankyrin repeat protein R903">
    <location>
        <begin position="1"/>
        <end position="365"/>
    </location>
</feature>
<feature type="repeat" description="ANK 1">
    <location>
        <begin position="38"/>
        <end position="67"/>
    </location>
</feature>
<feature type="repeat" description="ANK 2">
    <location>
        <begin position="68"/>
        <end position="97"/>
    </location>
</feature>
<feature type="repeat" description="ANK 3">
    <location>
        <begin position="99"/>
        <end position="127"/>
    </location>
</feature>
<feature type="repeat" description="ANK 4">
    <location>
        <begin position="129"/>
        <end position="158"/>
    </location>
</feature>
<feature type="repeat" description="ANK 5">
    <location>
        <begin position="184"/>
        <end position="213"/>
    </location>
</feature>
<feature type="repeat" description="ANK 6">
    <location>
        <begin position="214"/>
        <end position="243"/>
    </location>
</feature>
<feature type="repeat" description="ANK 7">
    <location>
        <begin position="245"/>
        <end position="273"/>
    </location>
</feature>
<feature type="repeat" description="ANK 8">
    <location>
        <begin position="275"/>
        <end position="298"/>
    </location>
</feature>
<feature type="repeat" description="ANK 9">
    <location>
        <begin position="299"/>
        <end position="328"/>
    </location>
</feature>
<feature type="repeat" description="ANK 10">
    <location>
        <begin position="330"/>
        <end position="361"/>
    </location>
</feature>
<protein>
    <recommendedName>
        <fullName>Putative ankyrin repeat protein R903</fullName>
    </recommendedName>
</protein>
<keyword id="KW-0040">ANK repeat</keyword>
<keyword id="KW-1185">Reference proteome</keyword>
<keyword id="KW-0677">Repeat</keyword>
<organism>
    <name type="scientific">Acanthamoeba polyphaga mimivirus</name>
    <name type="common">APMV</name>
    <dbReference type="NCBI Taxonomy" id="212035"/>
    <lineage>
        <taxon>Viruses</taxon>
        <taxon>Varidnaviria</taxon>
        <taxon>Bamfordvirae</taxon>
        <taxon>Nucleocytoviricota</taxon>
        <taxon>Megaviricetes</taxon>
        <taxon>Imitervirales</taxon>
        <taxon>Mimiviridae</taxon>
        <taxon>Megamimivirinae</taxon>
        <taxon>Mimivirus</taxon>
        <taxon>Mimivirus bradfordmassiliense</taxon>
    </lineage>
</organism>
<gene>
    <name type="ordered locus">MIMI_R903</name>
</gene>
<reference key="1">
    <citation type="journal article" date="2004" name="Science">
        <title>The 1.2-megabase genome sequence of Mimivirus.</title>
        <authorList>
            <person name="Raoult D."/>
            <person name="Audic S."/>
            <person name="Robert C."/>
            <person name="Abergel C."/>
            <person name="Renesto P."/>
            <person name="Ogata H."/>
            <person name="La Scola B."/>
            <person name="Susan M."/>
            <person name="Claverie J.-M."/>
        </authorList>
    </citation>
    <scope>NUCLEOTIDE SEQUENCE [LARGE SCALE GENOMIC DNA]</scope>
    <source>
        <strain>Rowbotham-Bradford</strain>
    </source>
</reference>
<sequence>MDELPYEIWIQIIDLLENPFNMLVSNKYTLSMTKYLKNINSFFMIFVEQGNLSWVKILHSQGYDIRFQNNEALKIACKYGYLEIVKYLYDHGCDIFIDNNFCLKIASERGHLEIVKYLYQNGYKFSNDSKPILDIAAANGHFEIIKYVRLLNPNNINKNGCIRMCWKIDNYDISIISYYYTDNKFKDNIYRATEYGNIEIIKKTWNKFCGNITVSNNLFKIAVVYGHLNIIKYMFKKGHRFPRQSNELIQIACGKGYLDIVKYLHKKGFSIVDSLLNIAGRFGHHDVVEYLYKRLKNVNLQKVITITIENDYLEIVKFFVTKENNPDEIRTYLILAHKHGHNRIIRYFDSLLIMTQQKLQSNLEN</sequence>
<name>YR903_MIMIV</name>
<accession>Q5UQZ5</accession>
<organismHost>
    <name type="scientific">Acanthamoeba polyphaga</name>
    <name type="common">Amoeba</name>
    <dbReference type="NCBI Taxonomy" id="5757"/>
</organismHost>